<feature type="signal peptide" evidence="2">
    <location>
        <begin position="1"/>
        <end position="22"/>
    </location>
</feature>
<feature type="chain" id="PRO_0000008997" description="Fibroblast growth factor 22">
    <location>
        <begin position="23"/>
        <end position="162"/>
    </location>
</feature>
<name>FGF22_MOUSE</name>
<comment type="function">
    <text>Plays a role in the fasting response, glucose homeostasis, lipolysis and lipogenesis. Can stimulate cell proliferation (in vitro). May be involved in hair development.</text>
</comment>
<comment type="subunit">
    <text evidence="1">Interacts with FGFR1 and FGFR2. Interacts with FGFBP1 (By similarity).</text>
</comment>
<comment type="subcellular location">
    <subcellularLocation>
        <location evidence="3">Secreted</location>
    </subcellularLocation>
</comment>
<comment type="tissue specificity">
    <text>Preferentially expressed in skin; low expression in brain. Expressed in the inner root sheath of the hair follicle.</text>
</comment>
<comment type="similarity">
    <text evidence="3">Belongs to the heparin-binding growth factors family.</text>
</comment>
<gene>
    <name type="primary">Fgf22</name>
</gene>
<protein>
    <recommendedName>
        <fullName>Fibroblast growth factor 22</fullName>
        <shortName>FGF-22</shortName>
    </recommendedName>
</protein>
<keyword id="KW-0339">Growth factor</keyword>
<keyword id="KW-1185">Reference proteome</keyword>
<keyword id="KW-0964">Secreted</keyword>
<keyword id="KW-0732">Signal</keyword>
<accession>Q9ESS2</accession>
<sequence>MRSRLWLGLAWLLLARAPGAPGGYPHLEGDVRWRRLFSSTHFFLRVDLGGRVQGTRWRHGQDSIVEIRSVRVGTVVIKAVYSGFYVAMNRRGRLYGSRVYSVDCRFRERIEENGYNTYASRRWRHRGRPMFLALDSQGIPRQGRRTRRHQLSTHFLPVLVSS</sequence>
<organism>
    <name type="scientific">Mus musculus</name>
    <name type="common">Mouse</name>
    <dbReference type="NCBI Taxonomy" id="10090"/>
    <lineage>
        <taxon>Eukaryota</taxon>
        <taxon>Metazoa</taxon>
        <taxon>Chordata</taxon>
        <taxon>Craniata</taxon>
        <taxon>Vertebrata</taxon>
        <taxon>Euteleostomi</taxon>
        <taxon>Mammalia</taxon>
        <taxon>Eutheria</taxon>
        <taxon>Euarchontoglires</taxon>
        <taxon>Glires</taxon>
        <taxon>Rodentia</taxon>
        <taxon>Myomorpha</taxon>
        <taxon>Muroidea</taxon>
        <taxon>Muridae</taxon>
        <taxon>Murinae</taxon>
        <taxon>Mus</taxon>
        <taxon>Mus</taxon>
    </lineage>
</organism>
<reference key="1">
    <citation type="journal article" date="2001" name="Biochim. Biophys. Acta">
        <title>Identification of a novel fibroblast growth factor, FGF-22, preferentially expressed in the inner root sheath of the hair follicle.</title>
        <authorList>
            <person name="Nakatake Y."/>
            <person name="Hoshikawa M."/>
            <person name="Asaki T."/>
            <person name="Kassai Y."/>
            <person name="Itoh N."/>
        </authorList>
    </citation>
    <scope>NUCLEOTIDE SEQUENCE [MRNA]</scope>
</reference>
<proteinExistence type="evidence at transcript level"/>
<evidence type="ECO:0000250" key="1"/>
<evidence type="ECO:0000255" key="2"/>
<evidence type="ECO:0000305" key="3"/>
<dbReference type="EMBL" id="AB036765">
    <property type="protein sequence ID" value="BAB16407.1"/>
    <property type="molecule type" value="mRNA"/>
</dbReference>
<dbReference type="CCDS" id="CCDS23988.1"/>
<dbReference type="RefSeq" id="NP_075793.1">
    <property type="nucleotide sequence ID" value="NM_023304.3"/>
</dbReference>
<dbReference type="SMR" id="Q9ESS2"/>
<dbReference type="BioGRID" id="211948">
    <property type="interactions" value="1"/>
</dbReference>
<dbReference type="FunCoup" id="Q9ESS2">
    <property type="interactions" value="826"/>
</dbReference>
<dbReference type="STRING" id="10090.ENSMUSP00000151743"/>
<dbReference type="PhosphoSitePlus" id="Q9ESS2"/>
<dbReference type="PaxDb" id="10090-ENSMUSP00000020577"/>
<dbReference type="Antibodypedia" id="22338">
    <property type="antibodies" value="284 antibodies from 28 providers"/>
</dbReference>
<dbReference type="DNASU" id="67112"/>
<dbReference type="Ensembl" id="ENSMUST00000219228.2">
    <property type="protein sequence ID" value="ENSMUSP00000151743.2"/>
    <property type="gene ID" value="ENSMUSG00000020327.5"/>
</dbReference>
<dbReference type="GeneID" id="67112"/>
<dbReference type="KEGG" id="mmu:67112"/>
<dbReference type="UCSC" id="uc007fzp.1">
    <property type="organism name" value="mouse"/>
</dbReference>
<dbReference type="AGR" id="MGI:1914362"/>
<dbReference type="CTD" id="27006"/>
<dbReference type="MGI" id="MGI:1914362">
    <property type="gene designation" value="Fgf22"/>
</dbReference>
<dbReference type="VEuPathDB" id="HostDB:ENSMUSG00000020327"/>
<dbReference type="eggNOG" id="KOG3885">
    <property type="taxonomic scope" value="Eukaryota"/>
</dbReference>
<dbReference type="GeneTree" id="ENSGT00940000161721"/>
<dbReference type="HOGENOM" id="CLU_081609_3_0_1"/>
<dbReference type="InParanoid" id="Q9ESS2"/>
<dbReference type="OMA" id="HCPNSIV"/>
<dbReference type="OrthoDB" id="10008525at2759"/>
<dbReference type="PhylomeDB" id="Q9ESS2"/>
<dbReference type="TreeFam" id="TF317805"/>
<dbReference type="Reactome" id="R-MMU-109704">
    <property type="pathway name" value="PI3K Cascade"/>
</dbReference>
<dbReference type="Reactome" id="R-MMU-1257604">
    <property type="pathway name" value="PIP3 activates AKT signaling"/>
</dbReference>
<dbReference type="Reactome" id="R-MMU-190370">
    <property type="pathway name" value="FGFR1b ligand binding and activation"/>
</dbReference>
<dbReference type="Reactome" id="R-MMU-190377">
    <property type="pathway name" value="FGFR2b ligand binding and activation"/>
</dbReference>
<dbReference type="Reactome" id="R-MMU-5654219">
    <property type="pathway name" value="Phospholipase C-mediated cascade: FGFR1"/>
</dbReference>
<dbReference type="Reactome" id="R-MMU-5654221">
    <property type="pathway name" value="Phospholipase C-mediated cascade, FGFR2"/>
</dbReference>
<dbReference type="Reactome" id="R-MMU-5654687">
    <property type="pathway name" value="Downstream signaling of activated FGFR1"/>
</dbReference>
<dbReference type="Reactome" id="R-MMU-5654688">
    <property type="pathway name" value="SHC-mediated cascade:FGFR1"/>
</dbReference>
<dbReference type="Reactome" id="R-MMU-5654689">
    <property type="pathway name" value="PI-3K cascade:FGFR1"/>
</dbReference>
<dbReference type="Reactome" id="R-MMU-5654693">
    <property type="pathway name" value="FRS-mediated FGFR1 signaling"/>
</dbReference>
<dbReference type="Reactome" id="R-MMU-5654695">
    <property type="pathway name" value="PI-3K cascade:FGFR2"/>
</dbReference>
<dbReference type="Reactome" id="R-MMU-5654699">
    <property type="pathway name" value="SHC-mediated cascade:FGFR2"/>
</dbReference>
<dbReference type="Reactome" id="R-MMU-5654700">
    <property type="pathway name" value="FRS-mediated FGFR2 signaling"/>
</dbReference>
<dbReference type="Reactome" id="R-MMU-5654726">
    <property type="pathway name" value="Negative regulation of FGFR1 signaling"/>
</dbReference>
<dbReference type="Reactome" id="R-MMU-5654727">
    <property type="pathway name" value="Negative regulation of FGFR2 signaling"/>
</dbReference>
<dbReference type="Reactome" id="R-MMU-5658623">
    <property type="pathway name" value="FGFRL1 modulation of FGFR1 signaling"/>
</dbReference>
<dbReference type="Reactome" id="R-MMU-5673001">
    <property type="pathway name" value="RAF/MAP kinase cascade"/>
</dbReference>
<dbReference type="Reactome" id="R-MMU-6811558">
    <property type="pathway name" value="PI5P, PP2A and IER3 Regulate PI3K/AKT Signaling"/>
</dbReference>
<dbReference type="BioGRID-ORCS" id="67112">
    <property type="hits" value="2 hits in 77 CRISPR screens"/>
</dbReference>
<dbReference type="PRO" id="PR:Q9ESS2"/>
<dbReference type="Proteomes" id="UP000000589">
    <property type="component" value="Chromosome 10"/>
</dbReference>
<dbReference type="RNAct" id="Q9ESS2">
    <property type="molecule type" value="protein"/>
</dbReference>
<dbReference type="Bgee" id="ENSMUSG00000020327">
    <property type="expression patterns" value="Expressed in lip and 38 other cell types or tissues"/>
</dbReference>
<dbReference type="ExpressionAtlas" id="Q9ESS2">
    <property type="expression patterns" value="baseline and differential"/>
</dbReference>
<dbReference type="GO" id="GO:0009986">
    <property type="term" value="C:cell surface"/>
    <property type="evidence" value="ECO:0000314"/>
    <property type="project" value="MGI"/>
</dbReference>
<dbReference type="GO" id="GO:0099147">
    <property type="term" value="C:extrinsic component of postsynaptic density membrane"/>
    <property type="evidence" value="ECO:0000314"/>
    <property type="project" value="SynGO"/>
</dbReference>
<dbReference type="GO" id="GO:0098982">
    <property type="term" value="C:GABA-ergic synapse"/>
    <property type="evidence" value="ECO:0000314"/>
    <property type="project" value="SynGO"/>
</dbReference>
<dbReference type="GO" id="GO:0098978">
    <property type="term" value="C:glutamatergic synapse"/>
    <property type="evidence" value="ECO:0000314"/>
    <property type="project" value="SynGO"/>
</dbReference>
<dbReference type="GO" id="GO:0005794">
    <property type="term" value="C:Golgi apparatus"/>
    <property type="evidence" value="ECO:0000314"/>
    <property type="project" value="MGI"/>
</dbReference>
<dbReference type="GO" id="GO:0005730">
    <property type="term" value="C:nucleolus"/>
    <property type="evidence" value="ECO:0000314"/>
    <property type="project" value="MGI"/>
</dbReference>
<dbReference type="GO" id="GO:0098794">
    <property type="term" value="C:postsynapse"/>
    <property type="evidence" value="ECO:0000314"/>
    <property type="project" value="SynGO"/>
</dbReference>
<dbReference type="GO" id="GO:0008083">
    <property type="term" value="F:growth factor activity"/>
    <property type="evidence" value="ECO:0007669"/>
    <property type="project" value="UniProtKB-KW"/>
</dbReference>
<dbReference type="GO" id="GO:0090128">
    <property type="term" value="P:regulation of synapse maturation"/>
    <property type="evidence" value="ECO:0000314"/>
    <property type="project" value="SynGO"/>
</dbReference>
<dbReference type="GO" id="GO:0099537">
    <property type="term" value="P:trans-synaptic signaling"/>
    <property type="evidence" value="ECO:0000314"/>
    <property type="project" value="SynGO"/>
</dbReference>
<dbReference type="CDD" id="cd23321">
    <property type="entry name" value="beta-trefoil_FGF22"/>
    <property type="match status" value="1"/>
</dbReference>
<dbReference type="FunFam" id="2.80.10.50:FF:000004">
    <property type="entry name" value="Fibroblast growth factor"/>
    <property type="match status" value="1"/>
</dbReference>
<dbReference type="Gene3D" id="2.80.10.50">
    <property type="match status" value="1"/>
</dbReference>
<dbReference type="InterPro" id="IPR002209">
    <property type="entry name" value="Fibroblast_GF_fam"/>
</dbReference>
<dbReference type="InterPro" id="IPR008996">
    <property type="entry name" value="IL1/FGF"/>
</dbReference>
<dbReference type="PANTHER" id="PTHR11486">
    <property type="entry name" value="FIBROBLAST GROWTH FACTOR"/>
    <property type="match status" value="1"/>
</dbReference>
<dbReference type="Pfam" id="PF00167">
    <property type="entry name" value="FGF"/>
    <property type="match status" value="1"/>
</dbReference>
<dbReference type="PRINTS" id="PR00263">
    <property type="entry name" value="HBGFFGF"/>
</dbReference>
<dbReference type="PRINTS" id="PR00262">
    <property type="entry name" value="IL1HBGF"/>
</dbReference>
<dbReference type="SMART" id="SM00442">
    <property type="entry name" value="FGF"/>
    <property type="match status" value="1"/>
</dbReference>
<dbReference type="SUPFAM" id="SSF50353">
    <property type="entry name" value="Cytokine"/>
    <property type="match status" value="1"/>
</dbReference>
<dbReference type="PROSITE" id="PS00247">
    <property type="entry name" value="HBGF_FGF"/>
    <property type="match status" value="1"/>
</dbReference>